<protein>
    <recommendedName>
        <fullName evidence="8">Muscle-specific protein 300 kDa</fullName>
    </recommendedName>
    <alternativeName>
        <fullName evidence="8">Nesprin-like protein Msp300</fullName>
    </alternativeName>
</protein>
<feature type="chain" id="PRO_0000454910" description="Muscle-specific protein 300 kDa">
    <location>
        <begin position="1"/>
        <end position="12345"/>
    </location>
</feature>
<feature type="topological domain" description="Cytoplasmic" evidence="4">
    <location>
        <begin position="1"/>
        <end position="12295"/>
    </location>
</feature>
<feature type="transmembrane region" description="Helical; Anchor for type IV membrane protein" evidence="4">
    <location>
        <begin position="12296"/>
        <end position="12316"/>
    </location>
</feature>
<feature type="topological domain" description="Perinuclear space" evidence="4">
    <location>
        <begin position="12317"/>
        <end position="12345"/>
    </location>
</feature>
<feature type="repeat" description="LRR 1" evidence="2">
    <location>
        <begin position="249"/>
        <end position="273"/>
    </location>
</feature>
<feature type="domain" description="Calponin-homology (CH) 1" evidence="3">
    <location>
        <begin position="630"/>
        <end position="737"/>
    </location>
</feature>
<feature type="domain" description="Calponin-homology (CH) 2" evidence="3">
    <location>
        <begin position="777"/>
        <end position="882"/>
    </location>
</feature>
<feature type="repeat" description="LRR 2" evidence="2">
    <location>
        <begin position="823"/>
        <end position="847"/>
    </location>
</feature>
<feature type="repeat" description="TPR 1" evidence="2">
    <location>
        <begin position="919"/>
        <end position="952"/>
    </location>
</feature>
<feature type="repeat" description="LRR 3" evidence="2">
    <location>
        <begin position="1089"/>
        <end position="1112"/>
    </location>
</feature>
<feature type="repeat" description="LRR 4" evidence="2">
    <location>
        <begin position="1389"/>
        <end position="1411"/>
    </location>
</feature>
<feature type="repeat" description="TPR 2" evidence="2">
    <location>
        <begin position="1603"/>
        <end position="1636"/>
    </location>
</feature>
<feature type="repeat" description="LRR 5" evidence="2">
    <location>
        <begin position="1616"/>
        <end position="1642"/>
    </location>
</feature>
<feature type="repeat" description="HAT 1" evidence="2">
    <location>
        <begin position="1903"/>
        <end position="1935"/>
    </location>
</feature>
<feature type="repeat" description="LRR 6" evidence="2">
    <location>
        <begin position="2087"/>
        <end position="2109"/>
    </location>
</feature>
<feature type="domain" description="Calponin-homology (CH) 3" evidence="3">
    <location>
        <begin position="2109"/>
        <end position="2233"/>
    </location>
</feature>
<feature type="repeat" description="LRR 7" evidence="2">
    <location>
        <begin position="2558"/>
        <end position="2581"/>
    </location>
</feature>
<feature type="repeat" description="TPR 3" evidence="2">
    <location>
        <begin position="2663"/>
        <end position="2696"/>
    </location>
</feature>
<feature type="repeat" description="LRR 8" evidence="2">
    <location>
        <begin position="2728"/>
        <end position="2751"/>
    </location>
</feature>
<feature type="repeat" description="LRR 9" evidence="2">
    <location>
        <begin position="2935"/>
        <end position="2959"/>
    </location>
</feature>
<feature type="repeat" description="LRR 10" evidence="2">
    <location>
        <begin position="3030"/>
        <end position="3053"/>
    </location>
</feature>
<feature type="repeat" description="Spectrin 1" evidence="2">
    <location>
        <begin position="3110"/>
        <end position="3207"/>
    </location>
</feature>
<feature type="repeat" description="TPR 4" evidence="2">
    <location>
        <begin position="3346"/>
        <end position="3379"/>
    </location>
</feature>
<feature type="repeat" description="LRR 11" evidence="2">
    <location>
        <begin position="3370"/>
        <end position="3393"/>
    </location>
</feature>
<feature type="repeat" description="LRR 12" evidence="2">
    <location>
        <begin position="3437"/>
        <end position="3462"/>
    </location>
</feature>
<feature type="repeat" description="LRR 13" evidence="2">
    <location>
        <begin position="3530"/>
        <end position="3556"/>
    </location>
</feature>
<feature type="repeat" description="Spectrin 2" evidence="2">
    <location>
        <begin position="3539"/>
        <end position="3633"/>
    </location>
</feature>
<feature type="repeat" description="LRR 14" evidence="2">
    <location>
        <begin position="3611"/>
        <end position="3634"/>
    </location>
</feature>
<feature type="repeat" description="TPR 5" evidence="2">
    <location>
        <begin position="3629"/>
        <end position="3662"/>
    </location>
</feature>
<feature type="repeat" description="HAT 2" evidence="2">
    <location>
        <begin position="3706"/>
        <end position="3739"/>
    </location>
</feature>
<feature type="repeat" description="LRR 15" evidence="2">
    <location>
        <begin position="3748"/>
        <end position="3771"/>
    </location>
</feature>
<feature type="repeat" description="Spectrin 3" evidence="2">
    <location>
        <begin position="4177"/>
        <end position="4273"/>
    </location>
</feature>
<feature type="repeat" description="TPR 6" evidence="2">
    <location>
        <begin position="4360"/>
        <end position="4393"/>
    </location>
</feature>
<feature type="repeat" description="HAT 3" evidence="2">
    <location>
        <begin position="4371"/>
        <end position="4403"/>
    </location>
</feature>
<feature type="repeat" description="Spectrin 4" evidence="2">
    <location>
        <begin position="4611"/>
        <end position="4701"/>
    </location>
</feature>
<feature type="repeat" description="LRR 16" evidence="2">
    <location>
        <begin position="4654"/>
        <end position="4676"/>
    </location>
</feature>
<feature type="repeat" description="LRR 17" evidence="2">
    <location>
        <begin position="4742"/>
        <end position="4763"/>
    </location>
</feature>
<feature type="repeat" description="HAT 4" evidence="2">
    <location>
        <begin position="4799"/>
        <end position="4830"/>
    </location>
</feature>
<feature type="repeat" description="Spectrin 5" evidence="2">
    <location>
        <begin position="4820"/>
        <end position="4919"/>
    </location>
</feature>
<feature type="repeat" description="LRR 18" evidence="2">
    <location>
        <begin position="4839"/>
        <end position="4863"/>
    </location>
</feature>
<feature type="repeat" description="HAT 5" evidence="2">
    <location>
        <begin position="4894"/>
        <end position="4926"/>
    </location>
</feature>
<feature type="repeat" description="LRR 19" evidence="2">
    <location>
        <begin position="5266"/>
        <end position="5289"/>
    </location>
</feature>
<feature type="repeat" description="LRR 20" evidence="2">
    <location>
        <begin position="5333"/>
        <end position="5357"/>
    </location>
</feature>
<feature type="repeat" description="TPR 7" evidence="2">
    <location>
        <begin position="5645"/>
        <end position="5678"/>
    </location>
</feature>
<feature type="repeat" description="LRR 21" evidence="2">
    <location>
        <begin position="5761"/>
        <end position="5784"/>
    </location>
</feature>
<feature type="repeat" description="Spectrin 6" evidence="2">
    <location>
        <begin position="5791"/>
        <end position="5895"/>
    </location>
</feature>
<feature type="repeat" description="LRR 22" evidence="2">
    <location>
        <begin position="5820"/>
        <end position="5843"/>
    </location>
</feature>
<feature type="repeat" description="LRR 23" evidence="2">
    <location>
        <begin position="5979"/>
        <end position="6002"/>
    </location>
</feature>
<feature type="repeat" description="HAT 6" evidence="2">
    <location>
        <begin position="6088"/>
        <end position="6120"/>
    </location>
</feature>
<feature type="repeat" description="Spectrin 7" evidence="2">
    <location>
        <begin position="6321"/>
        <end position="6405"/>
    </location>
</feature>
<feature type="repeat" description="LRR 24" evidence="2">
    <location>
        <begin position="6363"/>
        <end position="6387"/>
    </location>
</feature>
<feature type="repeat" description="Spectrin 8" evidence="2">
    <location>
        <begin position="6424"/>
        <end position="6530"/>
    </location>
</feature>
<feature type="repeat" description="TPR 8" evidence="2">
    <location>
        <begin position="6522"/>
        <end position="6555"/>
    </location>
</feature>
<feature type="repeat" description="LRR 25" evidence="2">
    <location>
        <begin position="6531"/>
        <end position="6554"/>
    </location>
</feature>
<feature type="repeat" description="LRR 26" evidence="2">
    <location>
        <begin position="6560"/>
        <end position="6587"/>
    </location>
</feature>
<feature type="repeat" description="TPR 9" evidence="2">
    <location>
        <begin position="6660"/>
        <end position="6695"/>
    </location>
</feature>
<feature type="repeat" description="LRR 27" evidence="2">
    <location>
        <begin position="7004"/>
        <end position="7026"/>
    </location>
</feature>
<feature type="repeat" description="TPR 10" evidence="2">
    <location>
        <begin position="7161"/>
        <end position="7195"/>
    </location>
</feature>
<feature type="repeat" description="LRR 28" evidence="2">
    <location>
        <begin position="7219"/>
        <end position="7242"/>
    </location>
</feature>
<feature type="repeat" description="LRR 29" evidence="2">
    <location>
        <begin position="7300"/>
        <end position="7318"/>
    </location>
</feature>
<feature type="repeat" description="LRR 30" evidence="2">
    <location>
        <begin position="7319"/>
        <end position="7339"/>
    </location>
</feature>
<feature type="repeat" description="LRR 31" evidence="2">
    <location>
        <begin position="7340"/>
        <end position="7361"/>
    </location>
</feature>
<feature type="repeat" description="LRR 32" evidence="2">
    <location>
        <begin position="7524"/>
        <end position="7547"/>
    </location>
</feature>
<feature type="repeat" description="HAT 7" evidence="2">
    <location>
        <begin position="7644"/>
        <end position="7676"/>
    </location>
</feature>
<feature type="repeat" description="TPR 11" evidence="2">
    <location>
        <begin position="7654"/>
        <end position="7687"/>
    </location>
</feature>
<feature type="repeat" description="LRR 33" evidence="2">
    <location>
        <begin position="7692"/>
        <end position="7714"/>
    </location>
</feature>
<feature type="repeat" description="LRR 34" evidence="2">
    <location>
        <begin position="7752"/>
        <end position="7777"/>
    </location>
</feature>
<feature type="repeat" description="TPR 12" evidence="2">
    <location>
        <begin position="7759"/>
        <end position="7792"/>
    </location>
</feature>
<feature type="repeat" description="LRR 35" evidence="2">
    <location>
        <begin position="7816"/>
        <end position="7840"/>
    </location>
</feature>
<feature type="repeat" description="TPR 13" evidence="2">
    <location>
        <begin position="7878"/>
        <end position="7911"/>
    </location>
</feature>
<feature type="repeat" description="LRR 36" evidence="2">
    <location>
        <begin position="8178"/>
        <end position="8201"/>
    </location>
</feature>
<feature type="repeat" description="LRR 37" evidence="2">
    <location>
        <begin position="8238"/>
        <end position="8264"/>
    </location>
</feature>
<feature type="repeat" description="LRR 38" evidence="2">
    <location>
        <begin position="8298"/>
        <end position="8321"/>
    </location>
</feature>
<feature type="repeat" description="LRR 39" evidence="2">
    <location>
        <begin position="8354"/>
        <end position="8377"/>
    </location>
</feature>
<feature type="repeat" description="TPR 14" evidence="2">
    <location>
        <begin position="8431"/>
        <end position="8464"/>
    </location>
</feature>
<feature type="repeat" description="LRR 40" evidence="2">
    <location>
        <begin position="8534"/>
        <end position="8557"/>
    </location>
</feature>
<feature type="repeat" description="LRR 41" evidence="2">
    <location>
        <begin position="9699"/>
        <end position="9721"/>
    </location>
</feature>
<feature type="repeat" description="LRR 42" evidence="2">
    <location>
        <begin position="9995"/>
        <end position="10019"/>
    </location>
</feature>
<feature type="repeat" description="LRR 43" evidence="2">
    <location>
        <begin position="10073"/>
        <end position="10096"/>
    </location>
</feature>
<feature type="repeat" description="TPR 15" evidence="2">
    <location>
        <begin position="10231"/>
        <end position="10264"/>
    </location>
</feature>
<feature type="repeat" description="LRR 44" evidence="2">
    <location>
        <begin position="10252"/>
        <end position="10276"/>
    </location>
</feature>
<feature type="repeat" description="LRR 45" evidence="2">
    <location>
        <begin position="10353"/>
        <end position="10376"/>
    </location>
</feature>
<feature type="repeat" description="HAT 8" evidence="2">
    <location>
        <begin position="10426"/>
        <end position="10458"/>
    </location>
</feature>
<feature type="repeat" description="LRR 46" evidence="2">
    <location>
        <begin position="10512"/>
        <end position="10535"/>
    </location>
</feature>
<feature type="repeat" description="LRR 47" evidence="2">
    <location>
        <begin position="10570"/>
        <end position="10593"/>
    </location>
</feature>
<feature type="repeat" description="LRR 48" evidence="2">
    <location>
        <begin position="10644"/>
        <end position="10667"/>
    </location>
</feature>
<feature type="repeat" description="TPR 16" evidence="2">
    <location>
        <begin position="10854"/>
        <end position="10888"/>
    </location>
</feature>
<feature type="repeat" description="HAT 9" evidence="2">
    <location>
        <begin position="10855"/>
        <end position="10887"/>
    </location>
</feature>
<feature type="repeat" description="LRR 49" evidence="2">
    <location>
        <begin position="10907"/>
        <end position="10929"/>
    </location>
</feature>
<feature type="repeat" description="LRR 50" evidence="2">
    <location>
        <begin position="11021"/>
        <end position="11043"/>
    </location>
</feature>
<feature type="repeat" description="HAT 10" evidence="2">
    <location>
        <begin position="11070"/>
        <end position="11104"/>
    </location>
</feature>
<feature type="repeat" description="TPR 17" evidence="2">
    <location>
        <begin position="11072"/>
        <end position="11105"/>
    </location>
</feature>
<feature type="repeat" description="LRR 51" evidence="2">
    <location>
        <begin position="11197"/>
        <end position="11222"/>
    </location>
</feature>
<feature type="repeat" description="LRR 52" evidence="2">
    <location>
        <begin position="11342"/>
        <end position="11365"/>
    </location>
</feature>
<feature type="repeat" description="LRR 53" evidence="2">
    <location>
        <begin position="11398"/>
        <end position="11422"/>
    </location>
</feature>
<feature type="repeat" description="LRR 54" evidence="2">
    <location>
        <begin position="11670"/>
        <end position="11692"/>
    </location>
</feature>
<feature type="repeat" description="LRR 55" evidence="2">
    <location>
        <begin position="11697"/>
        <end position="11720"/>
    </location>
</feature>
<feature type="repeat" description="LRR 56" evidence="2">
    <location>
        <begin position="11744"/>
        <end position="11766"/>
    </location>
</feature>
<feature type="repeat" description="HAT 11" evidence="2">
    <location>
        <begin position="11804"/>
        <end position="11836"/>
    </location>
</feature>
<feature type="repeat" description="LRR 57" evidence="2">
    <location>
        <begin position="11959"/>
        <end position="11981"/>
    </location>
</feature>
<feature type="repeat" description="LRR 58" evidence="2">
    <location>
        <begin position="12198"/>
        <end position="12220"/>
    </location>
</feature>
<feature type="domain" description="KASH" evidence="4">
    <location>
        <begin position="12287"/>
        <end position="12345"/>
    </location>
</feature>
<feature type="repeat" description="LRR 59" evidence="2">
    <location>
        <begin position="12301"/>
        <end position="12323"/>
    </location>
</feature>
<feature type="region of interest" description="Disordered" evidence="5">
    <location>
        <begin position="1"/>
        <end position="68"/>
    </location>
</feature>
<feature type="region of interest" description="Disordered" evidence="5">
    <location>
        <begin position="121"/>
        <end position="152"/>
    </location>
</feature>
<feature type="region of interest" description="Disordered" evidence="5">
    <location>
        <begin position="295"/>
        <end position="325"/>
    </location>
</feature>
<feature type="region of interest" description="Disordered" evidence="5">
    <location>
        <begin position="387"/>
        <end position="488"/>
    </location>
</feature>
<feature type="region of interest" description="Disordered" evidence="5">
    <location>
        <begin position="504"/>
        <end position="526"/>
    </location>
</feature>
<feature type="region of interest" description="Disordered" evidence="5">
    <location>
        <begin position="2699"/>
        <end position="2724"/>
    </location>
</feature>
<feature type="region of interest" description="Disordered" evidence="5">
    <location>
        <begin position="6631"/>
        <end position="6657"/>
    </location>
</feature>
<feature type="region of interest" description="Disordered" evidence="5">
    <location>
        <begin position="8583"/>
        <end position="8616"/>
    </location>
</feature>
<feature type="region of interest" description="Disordered" evidence="5">
    <location>
        <begin position="8966"/>
        <end position="9023"/>
    </location>
</feature>
<feature type="region of interest" description="Disordered" evidence="5">
    <location>
        <begin position="9131"/>
        <end position="9158"/>
    </location>
</feature>
<feature type="region of interest" description="Disordered" evidence="5">
    <location>
        <begin position="9361"/>
        <end position="9459"/>
    </location>
</feature>
<feature type="region of interest" description="Disordered" evidence="5">
    <location>
        <begin position="9502"/>
        <end position="9735"/>
    </location>
</feature>
<feature type="region of interest" description="Disordered" evidence="5">
    <location>
        <begin position="9769"/>
        <end position="9797"/>
    </location>
</feature>
<feature type="region of interest" description="Disordered" evidence="5">
    <location>
        <begin position="12253"/>
        <end position="12272"/>
    </location>
</feature>
<feature type="coiled-coil region" evidence="2">
    <location>
        <begin position="2894"/>
        <end position="2962"/>
    </location>
</feature>
<feature type="coiled-coil region" evidence="2">
    <location>
        <begin position="6356"/>
        <end position="6397"/>
    </location>
</feature>
<feature type="coiled-coil region" evidence="2">
    <location>
        <begin position="6454"/>
        <end position="6484"/>
    </location>
</feature>
<feature type="coiled-coil region" evidence="2">
    <location>
        <begin position="6567"/>
        <end position="6597"/>
    </location>
</feature>
<feature type="coiled-coil region" evidence="2">
    <location>
        <begin position="7419"/>
        <end position="7457"/>
    </location>
</feature>
<feature type="coiled-coil region" evidence="2">
    <location>
        <begin position="7799"/>
        <end position="7935"/>
    </location>
</feature>
<feature type="coiled-coil region" evidence="2">
    <location>
        <begin position="10072"/>
        <end position="10099"/>
    </location>
</feature>
<feature type="coiled-coil region" evidence="2">
    <location>
        <begin position="10172"/>
        <end position="10257"/>
    </location>
</feature>
<feature type="coiled-coil region" evidence="2">
    <location>
        <begin position="11016"/>
        <end position="11046"/>
    </location>
</feature>
<feature type="coiled-coil region" evidence="2">
    <location>
        <begin position="11220"/>
        <end position="11247"/>
    </location>
</feature>
<feature type="coiled-coil region" evidence="2">
    <location>
        <begin position="11281"/>
        <end position="11308"/>
    </location>
</feature>
<feature type="coiled-coil region" evidence="2">
    <location>
        <begin position="11655"/>
        <end position="11685"/>
    </location>
</feature>
<feature type="coiled-coil region" evidence="2">
    <location>
        <begin position="11776"/>
        <end position="11806"/>
    </location>
</feature>
<feature type="compositionally biased region" description="Gly residues" evidence="5">
    <location>
        <begin position="19"/>
        <end position="28"/>
    </location>
</feature>
<feature type="compositionally biased region" description="Basic and acidic residues" evidence="5">
    <location>
        <begin position="45"/>
        <end position="60"/>
    </location>
</feature>
<feature type="compositionally biased region" description="Low complexity" evidence="5">
    <location>
        <begin position="299"/>
        <end position="321"/>
    </location>
</feature>
<feature type="compositionally biased region" description="Polar residues" evidence="5">
    <location>
        <begin position="387"/>
        <end position="404"/>
    </location>
</feature>
<feature type="compositionally biased region" description="Polar residues" evidence="5">
    <location>
        <begin position="414"/>
        <end position="434"/>
    </location>
</feature>
<feature type="compositionally biased region" description="Low complexity" evidence="5">
    <location>
        <begin position="462"/>
        <end position="484"/>
    </location>
</feature>
<feature type="compositionally biased region" description="Acidic residues" evidence="5">
    <location>
        <begin position="511"/>
        <end position="520"/>
    </location>
</feature>
<feature type="compositionally biased region" description="Basic and acidic residues" evidence="5">
    <location>
        <begin position="2704"/>
        <end position="2724"/>
    </location>
</feature>
<feature type="compositionally biased region" description="Polar residues" evidence="5">
    <location>
        <begin position="8601"/>
        <end position="8611"/>
    </location>
</feature>
<feature type="compositionally biased region" description="Low complexity" evidence="5">
    <location>
        <begin position="8982"/>
        <end position="9011"/>
    </location>
</feature>
<feature type="compositionally biased region" description="Basic and acidic residues" evidence="5">
    <location>
        <begin position="9136"/>
        <end position="9151"/>
    </location>
</feature>
<feature type="compositionally biased region" description="Basic residues" evidence="5">
    <location>
        <begin position="9394"/>
        <end position="9404"/>
    </location>
</feature>
<feature type="compositionally biased region" description="Acidic residues" evidence="5">
    <location>
        <begin position="9410"/>
        <end position="9419"/>
    </location>
</feature>
<feature type="compositionally biased region" description="Low complexity" evidence="5">
    <location>
        <begin position="9420"/>
        <end position="9439"/>
    </location>
</feature>
<feature type="compositionally biased region" description="Basic and acidic residues" evidence="5">
    <location>
        <begin position="9440"/>
        <end position="9451"/>
    </location>
</feature>
<feature type="compositionally biased region" description="Polar residues" evidence="5">
    <location>
        <begin position="9544"/>
        <end position="9563"/>
    </location>
</feature>
<feature type="compositionally biased region" description="Polar residues" evidence="5">
    <location>
        <begin position="9587"/>
        <end position="9597"/>
    </location>
</feature>
<feature type="compositionally biased region" description="Polar residues" evidence="5">
    <location>
        <begin position="9605"/>
        <end position="9625"/>
    </location>
</feature>
<feature type="compositionally biased region" description="Low complexity" evidence="5">
    <location>
        <begin position="9658"/>
        <end position="9680"/>
    </location>
</feature>
<feature type="compositionally biased region" description="Basic and acidic residues" evidence="5">
    <location>
        <begin position="9681"/>
        <end position="9698"/>
    </location>
</feature>
<feature type="compositionally biased region" description="Polar residues" evidence="5">
    <location>
        <begin position="9711"/>
        <end position="9735"/>
    </location>
</feature>
<feature type="compositionally biased region" description="Basic residues" evidence="5">
    <location>
        <begin position="9777"/>
        <end position="9788"/>
    </location>
</feature>
<feature type="compositionally biased region" description="Low complexity" evidence="5">
    <location>
        <begin position="12256"/>
        <end position="12267"/>
    </location>
</feature>
<comment type="function">
    <text evidence="1 6 7">Component of the LINC (LInker of Nucleoskeleton and Cytoskeleton) complex involved in the connection between the nuclear lamina and the cytoskeleton (By similarity). Collaborates with Klar to promote even spacing of the myonuclei at the periphery of striated muscle fibers by mediating a tight association between a nuclear ring structure of Msp300 and the plus ends of a unique astral MT network (PubMed:22927463). In addition, is essential for anchoring nuclei, mitochondria and endoplasmic reticulum (ER) structures to the Z-disks (PubMed:22927463). In fat body cells, part of perinuclear non-centrosomal microtubule-organizing centers (ncMTOCs) which function to accommodate the organization of microtubule (MT) networks to control nuclear positioning and dynein motor-based retrograde endosomal trafficking (PubMed:32066907). Functions as the primary organizer of the ncMTOC by recruiting Patronin, shot and msps to the organizing centre (PubMed:32066907). Within the ncMTOC, Msp300 and shot anchors the ncMTOC at the nuclear surface and recruits the MT minus-end regulators Patronin and Nin for assembly, anchoring and/or stabilization of circumferential and radial MTs at the ncMTOCs (PubMed:32066907). Patronin, and perhaps Nin, recruits msps to the ncMTOC for the gamma-tubulin-independent elongation of radial MTs (PubMed:32066907).</text>
</comment>
<comment type="subunit">
    <text evidence="1 6">Core component of LINC complexes which are composed of inner nuclear membrane SUN domain-containing proteins coupled to outer nuclear membrane KASH domain-containing nesprins (By similarity). Interacts with klar; this interaction allows the anchoring of the Msp300 nuclear ring structure to the nuclear envelope (PubMed:22927463). Interacts with sls; this interaction mediates the recruitment of Msp300 to the Z-disks (PubMed:22927463).</text>
</comment>
<comment type="subcellular location">
    <subcellularLocation>
        <location evidence="6">Nucleus membrane</location>
    </subcellularLocation>
    <subcellularLocation>
        <location evidence="6">Cytoplasm</location>
        <location evidence="6">Myofibril</location>
        <location evidence="6">Sarcomere</location>
        <location evidence="6">Z line</location>
    </subcellularLocation>
    <subcellularLocation>
        <location evidence="7">Cytoplasm</location>
        <location evidence="7">Cytoskeleton</location>
        <location evidence="7">Microtubule organizing center</location>
    </subcellularLocation>
    <subcellularLocation>
        <location evidence="7">Cytoplasm</location>
        <location evidence="7">Perinuclear region</location>
    </subcellularLocation>
    <text evidence="6 7">The recruitment to the Z-disks is mediated by interaction with sls (PubMed:22927463). In the fat body, localizes to a perinuclear non-centrosomal microtubule-organizing centers (ncMTOCs) (PubMed:32066907).</text>
</comment>
<comment type="domain">
    <text evidence="6">Msp300 and Klar KASH domains cooperate to mediate the connection between a nuclear ring structure of Msp300 and the plus ends of a unique astral microtubule (MT) network.</text>
</comment>
<comment type="disruption phenotype">
    <text evidence="7">RNAi-mediated knockdown reduces both radial and circumferential microtubules in fat body cells, resulting in strong defects in nuclear positioning (PubMed:32066907). This results in plasma membrane overgrowth and impaired endocytosis resulting in entrapment of collagen IV at the plasma membrane (PubMed:32066907).</text>
</comment>
<comment type="similarity">
    <text evidence="8">Belongs to the nesprin family.</text>
</comment>
<accession>M9MRD1</accession>
<reference key="1">
    <citation type="journal article" date="2000" name="Science">
        <title>The genome sequence of Drosophila melanogaster.</title>
        <authorList>
            <person name="Adams M.D."/>
            <person name="Celniker S.E."/>
            <person name="Holt R.A."/>
            <person name="Evans C.A."/>
            <person name="Gocayne J.D."/>
            <person name="Amanatides P.G."/>
            <person name="Scherer S.E."/>
            <person name="Li P.W."/>
            <person name="Hoskins R.A."/>
            <person name="Galle R.F."/>
            <person name="George R.A."/>
            <person name="Lewis S.E."/>
            <person name="Richards S."/>
            <person name="Ashburner M."/>
            <person name="Henderson S.N."/>
            <person name="Sutton G.G."/>
            <person name="Wortman J.R."/>
            <person name="Yandell M.D."/>
            <person name="Zhang Q."/>
            <person name="Chen L.X."/>
            <person name="Brandon R.C."/>
            <person name="Rogers Y.-H.C."/>
            <person name="Blazej R.G."/>
            <person name="Champe M."/>
            <person name="Pfeiffer B.D."/>
            <person name="Wan K.H."/>
            <person name="Doyle C."/>
            <person name="Baxter E.G."/>
            <person name="Helt G."/>
            <person name="Nelson C.R."/>
            <person name="Miklos G.L.G."/>
            <person name="Abril J.F."/>
            <person name="Agbayani A."/>
            <person name="An H.-J."/>
            <person name="Andrews-Pfannkoch C."/>
            <person name="Baldwin D."/>
            <person name="Ballew R.M."/>
            <person name="Basu A."/>
            <person name="Baxendale J."/>
            <person name="Bayraktaroglu L."/>
            <person name="Beasley E.M."/>
            <person name="Beeson K.Y."/>
            <person name="Benos P.V."/>
            <person name="Berman B.P."/>
            <person name="Bhandari D."/>
            <person name="Bolshakov S."/>
            <person name="Borkova D."/>
            <person name="Botchan M.R."/>
            <person name="Bouck J."/>
            <person name="Brokstein P."/>
            <person name="Brottier P."/>
            <person name="Burtis K.C."/>
            <person name="Busam D.A."/>
            <person name="Butler H."/>
            <person name="Cadieu E."/>
            <person name="Center A."/>
            <person name="Chandra I."/>
            <person name="Cherry J.M."/>
            <person name="Cawley S."/>
            <person name="Dahlke C."/>
            <person name="Davenport L.B."/>
            <person name="Davies P."/>
            <person name="de Pablos B."/>
            <person name="Delcher A."/>
            <person name="Deng Z."/>
            <person name="Mays A.D."/>
            <person name="Dew I."/>
            <person name="Dietz S.M."/>
            <person name="Dodson K."/>
            <person name="Doup L.E."/>
            <person name="Downes M."/>
            <person name="Dugan-Rocha S."/>
            <person name="Dunkov B.C."/>
            <person name="Dunn P."/>
            <person name="Durbin K.J."/>
            <person name="Evangelista C.C."/>
            <person name="Ferraz C."/>
            <person name="Ferriera S."/>
            <person name="Fleischmann W."/>
            <person name="Fosler C."/>
            <person name="Gabrielian A.E."/>
            <person name="Garg N.S."/>
            <person name="Gelbart W.M."/>
            <person name="Glasser K."/>
            <person name="Glodek A."/>
            <person name="Gong F."/>
            <person name="Gorrell J.H."/>
            <person name="Gu Z."/>
            <person name="Guan P."/>
            <person name="Harris M."/>
            <person name="Harris N.L."/>
            <person name="Harvey D.A."/>
            <person name="Heiman T.J."/>
            <person name="Hernandez J.R."/>
            <person name="Houck J."/>
            <person name="Hostin D."/>
            <person name="Houston K.A."/>
            <person name="Howland T.J."/>
            <person name="Wei M.-H."/>
            <person name="Ibegwam C."/>
            <person name="Jalali M."/>
            <person name="Kalush F."/>
            <person name="Karpen G.H."/>
            <person name="Ke Z."/>
            <person name="Kennison J.A."/>
            <person name="Ketchum K.A."/>
            <person name="Kimmel B.E."/>
            <person name="Kodira C.D."/>
            <person name="Kraft C.L."/>
            <person name="Kravitz S."/>
            <person name="Kulp D."/>
            <person name="Lai Z."/>
            <person name="Lasko P."/>
            <person name="Lei Y."/>
            <person name="Levitsky A.A."/>
            <person name="Li J.H."/>
            <person name="Li Z."/>
            <person name="Liang Y."/>
            <person name="Lin X."/>
            <person name="Liu X."/>
            <person name="Mattei B."/>
            <person name="McIntosh T.C."/>
            <person name="McLeod M.P."/>
            <person name="McPherson D."/>
            <person name="Merkulov G."/>
            <person name="Milshina N.V."/>
            <person name="Mobarry C."/>
            <person name="Morris J."/>
            <person name="Moshrefi A."/>
            <person name="Mount S.M."/>
            <person name="Moy M."/>
            <person name="Murphy B."/>
            <person name="Murphy L."/>
            <person name="Muzny D.M."/>
            <person name="Nelson D.L."/>
            <person name="Nelson D.R."/>
            <person name="Nelson K.A."/>
            <person name="Nixon K."/>
            <person name="Nusskern D.R."/>
            <person name="Pacleb J.M."/>
            <person name="Palazzolo M."/>
            <person name="Pittman G.S."/>
            <person name="Pan S."/>
            <person name="Pollard J."/>
            <person name="Puri V."/>
            <person name="Reese M.G."/>
            <person name="Reinert K."/>
            <person name="Remington K."/>
            <person name="Saunders R.D.C."/>
            <person name="Scheeler F."/>
            <person name="Shen H."/>
            <person name="Shue B.C."/>
            <person name="Siden-Kiamos I."/>
            <person name="Simpson M."/>
            <person name="Skupski M.P."/>
            <person name="Smith T.J."/>
            <person name="Spier E."/>
            <person name="Spradling A.C."/>
            <person name="Stapleton M."/>
            <person name="Strong R."/>
            <person name="Sun E."/>
            <person name="Svirskas R."/>
            <person name="Tector C."/>
            <person name="Turner R."/>
            <person name="Venter E."/>
            <person name="Wang A.H."/>
            <person name="Wang X."/>
            <person name="Wang Z.-Y."/>
            <person name="Wassarman D.A."/>
            <person name="Weinstock G.M."/>
            <person name="Weissenbach J."/>
            <person name="Williams S.M."/>
            <person name="Woodage T."/>
            <person name="Worley K.C."/>
            <person name="Wu D."/>
            <person name="Yang S."/>
            <person name="Yao Q.A."/>
            <person name="Ye J."/>
            <person name="Yeh R.-F."/>
            <person name="Zaveri J.S."/>
            <person name="Zhan M."/>
            <person name="Zhang G."/>
            <person name="Zhao Q."/>
            <person name="Zheng L."/>
            <person name="Zheng X.H."/>
            <person name="Zhong F.N."/>
            <person name="Zhong W."/>
            <person name="Zhou X."/>
            <person name="Zhu S.C."/>
            <person name="Zhu X."/>
            <person name="Smith H.O."/>
            <person name="Gibbs R.A."/>
            <person name="Myers E.W."/>
            <person name="Rubin G.M."/>
            <person name="Venter J.C."/>
        </authorList>
    </citation>
    <scope>NUCLEOTIDE SEQUENCE [LARGE SCALE GENOMIC DNA]</scope>
    <source>
        <strain>Berkeley</strain>
    </source>
</reference>
<reference key="2">
    <citation type="journal article" date="2002" name="Genome Biol.">
        <title>Annotation of the Drosophila melanogaster euchromatic genome: a systematic review.</title>
        <authorList>
            <person name="Misra S."/>
            <person name="Crosby M.A."/>
            <person name="Mungall C.J."/>
            <person name="Matthews B.B."/>
            <person name="Campbell K.S."/>
            <person name="Hradecky P."/>
            <person name="Huang Y."/>
            <person name="Kaminker J.S."/>
            <person name="Millburn G.H."/>
            <person name="Prochnik S.E."/>
            <person name="Smith C.D."/>
            <person name="Tupy J.L."/>
            <person name="Whitfield E.J."/>
            <person name="Bayraktaroglu L."/>
            <person name="Berman B.P."/>
            <person name="Bettencourt B.R."/>
            <person name="Celniker S.E."/>
            <person name="de Grey A.D.N.J."/>
            <person name="Drysdale R.A."/>
            <person name="Harris N.L."/>
            <person name="Richter J."/>
            <person name="Russo S."/>
            <person name="Schroeder A.J."/>
            <person name="Shu S.Q."/>
            <person name="Stapleton M."/>
            <person name="Yamada C."/>
            <person name="Ashburner M."/>
            <person name="Gelbart W.M."/>
            <person name="Rubin G.M."/>
            <person name="Lewis S.E."/>
        </authorList>
    </citation>
    <scope>GENOME REANNOTATION</scope>
    <source>
        <strain>Berkeley</strain>
    </source>
</reference>
<reference key="3">
    <citation type="journal article" date="2012" name="J. Cell Biol.">
        <title>Organelle positioning in muscles requires cooperation between two KASH proteins and microtubules.</title>
        <authorList>
            <person name="Elhanany-Tamir H."/>
            <person name="Yu Y.V."/>
            <person name="Shnayder M."/>
            <person name="Jain A."/>
            <person name="Welte M."/>
            <person name="Volk T."/>
        </authorList>
    </citation>
    <scope>SUBCELLULAR LOCATION</scope>
    <scope>FUNCTION</scope>
    <scope>INTERACTION WITH KLAR AND SLS</scope>
    <scope>DOMAIN</scope>
</reference>
<reference key="4">
    <citation type="journal article" date="2020" name="Nat. Cell Biol.">
        <title>A perinuclear microtubule-organizing centre controls nuclear positioning and basement membrane secretion.</title>
        <authorList>
            <person name="Zheng Y."/>
            <person name="Buchwalter R.A."/>
            <person name="Zheng C."/>
            <person name="Wight E.M."/>
            <person name="Chen J.V."/>
            <person name="Megraw T.L."/>
        </authorList>
    </citation>
    <scope>FUNCTION</scope>
    <scope>SUBCELLULAR LOCATION</scope>
    <scope>DISRUPTION PHENOTYPE</scope>
</reference>
<keyword id="KW-0009">Actin-binding</keyword>
<keyword id="KW-0175">Coiled coil</keyword>
<keyword id="KW-0963">Cytoplasm</keyword>
<keyword id="KW-0206">Cytoskeleton</keyword>
<keyword id="KW-0433">Leucine-rich repeat</keyword>
<keyword id="KW-0472">Membrane</keyword>
<keyword id="KW-0539">Nucleus</keyword>
<keyword id="KW-1185">Reference proteome</keyword>
<keyword id="KW-0677">Repeat</keyword>
<keyword id="KW-0802">TPR repeat</keyword>
<keyword id="KW-0812">Transmembrane</keyword>
<keyword id="KW-1133">Transmembrane helix</keyword>
<organism>
    <name type="scientific">Drosophila melanogaster</name>
    <name type="common">Fruit fly</name>
    <dbReference type="NCBI Taxonomy" id="7227"/>
    <lineage>
        <taxon>Eukaryota</taxon>
        <taxon>Metazoa</taxon>
        <taxon>Ecdysozoa</taxon>
        <taxon>Arthropoda</taxon>
        <taxon>Hexapoda</taxon>
        <taxon>Insecta</taxon>
        <taxon>Pterygota</taxon>
        <taxon>Neoptera</taxon>
        <taxon>Endopterygota</taxon>
        <taxon>Diptera</taxon>
        <taxon>Brachycera</taxon>
        <taxon>Muscomorpha</taxon>
        <taxon>Ephydroidea</taxon>
        <taxon>Drosophilidae</taxon>
        <taxon>Drosophila</taxon>
        <taxon>Sophophora</taxon>
    </lineage>
</organism>
<sequence>MADSGGPGSKHMDPTTIDAGGGGAGAAGGDDVPPVPAVRRRRAHEQKSSREQVLEEEKSQQLETSTVTRTYMKTITTSLTTSSSSNVEEFILGEHAAGAAAAPSPNQQRLRQKVAQYEKVWSDGSSPVKRPAEQSSDELRLTDDQDEYDAENPFEIDVHEIERRLRQERQRGLAEAEAAKLAFQQVQLRHTTPPRRVEVTSDQVASPFNVTLRTTSRMSPGAEHGNVEEHLAPFNVTLRTTRRTKKKEFKELENFLEGERTVREVPSADGVRTIITSSMTSDGGYAEEKIYRHGEGYVSPRDSPSWSRSSYSSERSSVTPPRSVDLTAGGRRILIKLEQESELTEENQTRDETDLSFGRQEVAMATGNIDITVGGSNPRRRLYQQTTVQVGGGNRTSPQDSTPQRPRDLDLAGTTKTMLTSTPIGTKEQPQTGPKTLVSPAATCQLRGSSTEEPRKIVSHKTITSTTTKSTSSSTSATSSSSTSRKLIETSPVVVGKIAQIRTGKSNASDNDIDIDNDSDTEGRPASSIVIVSTPTRPTTPATASVSASAVTPSASISATAAHALSGIGTFSKSLRQDYQTLATQSGRSNESPSDQEYQEFQSTMASINYARSNSQYDSHIKEKREEQERVQKKTFTNWINSYLLKRVPPLRIDDLINDLRDGTKLIALLEVLSGERLPVEKGRVLRRPHFLSNANTALQFLASKRIKLVNINPADLVDGRPPVVLGLIWTIILYFQIEENSRNLEYLGHGIGGSVSSLDSVGNQKHGDLKAEKWKQGARKTLLNWVTNALPKDSGVEVKDFGASWRDGVAFLALIDAIKANLVNLAELKKTSNRQRLETAFDVAESKLGIAKLLDAEDVDVPKPDEKSIMTYVAQFLHKYPEPKGASRDQSHVQQEADELRRFLVEKTTEYEPMVMMSSFPRDFGEYLLARSEVDAHLAAYNRLKQLIESQSGFLQVSRQSWEEINELWQRLQYQMMYWLWLLDSELPGDFGTVGKWLAEAEKLLMDNDIPNAMNEETAAVISRKLEEHKLFFADLPRILAMFDNAKRSPVAQQIPLEQLRNMERRLQEVGPKAAERRIRLKFLEHKCCLIAFLNLVENKMRGWTGKYGHEEKVAQQLEQYKNFVSRNKIFQEFQKAFVDMQQVVEEYKRDGNVPRKEINDIDRFMYETEERWKRVSMELKCCQNSLEEVVNCWRSWNQLAPTCEEWLQLAEQKVNQSEDERLDFFQDIPVWKDKFDALASSANYLIASCEEPIAQQLRQRHGALSERFERLFANTKQYMHAGDIIRSRQEYKSGIEQLSRWLRGAESVLDQRQVLGNSEQVKEYGQQLQQLASEIDDNEELFKTISRNFQSLIQDLSRDEVDKMMKLLKQEKESLVRIRAQLPAKLHLFHQLQIQQESLEAGQKEIHQWLSEAEQLLGTHNLSGGRDAINEQLHKHKTYFSRTVYYRSMLESKNKVFQNLLKAVSSDDKIDTAPASQQMQQLNERFNYVIQNAQQWEQRLDSAAGGWSNFKDNERVVSEWLTQAESMLVEKHIESKTTIETQKYFFEQVNDRWMNDLVQSAQQLLTTLPAQEQPAVVHSVEQLQSRWKNVLSQAPLHLLKLEFRLDENAFYQSLKDVEKELQLEQQALNRNEDVDSILQRNQQFLLQQDVVPRLERCLQNMQRLAQAHRQQQPGDISLDQAYDNAKSQWQLLSNKLGDMRQTLQQIPAQWQGYHLKFNDMVDWMNGVDQSLKNIVNEVNTMEEFEKEKVVFQKICQDADNKREDMKWLVKTLDSLLSYATEDEANLEQKKLEDLIARYKNLIPTIEITMVKTEVFSKCYTYRREVHEVVCLLSKVKDQTANIPAPDSLDRVNRLIEEQQYAINQLDHQRPHIMSMLQRGRDLIKDVHAPAFVNAEVKNLETGWNQAYTETSDKLQALKGTQAVWSEFVDQKNDIFSMLQTAETELRSLTPLQTDPKNVSQDLKSKRDLNVQLQQASHQLLPKLHALKSELAPLAAPDKRPILEKEVTEVEKMFFNTMEHVKDRVGYLEDYSAKWNNYKTRLAELQEWANKVAPKNIEALQSEDLTPEERVVKVQAFKRILGDRMKQLDLLAADASELAPKEGNIAEAKRLKGEITKLQEVLSAINRNVDHQAQAVQEDLVNWQQFQAGLQQIKPAVEQSEVKVNNVVSKPISLEEAVAMQQNAQQFETQCQEQLDKLHGISNISHKMLCKTNAPDELDAMHSRWTAVHENAKQASAKLEKLVANWKSFDADAAKLEDWVGQGEQQMSRRPAVLNTPHIDKLEKELVKLKSFNNEISQQQAKLVTLGQNADQISLHLAPEGAAALKDRVNQMKGKLQKLSEATRGHINEVSDAIISRQDFNAKLVNFSNWMEQLRNQVTQVEEINPERVETSLHVIHALLQEHADKKPSFNAIYDEVKQLALGATPEESNALNDAYTALVVNYQNLETNMLQKKAALEKWTELLGWKNDTESHLNYLKHQLDKPEGPAAEELSKVIDEIDNLGQGIGYWKGQAKEIDENPAIQLRDALSRRPLIATQIVNDVENKLENLKLRSQSQQQQIQQMTVRKDKFHALEHNFGQALQENRAKLDEILRQHPTLNNIDQIIADLVALNDALKYQADLKNRIHDEGSLLMREDIASMPAIQESLLIMDKNYDSLQNEIADRIQKYNLISQALREYADSKDKFSKELKKAEDLYNAIPQQPRDETELHQASEKTRKTMEQLRKSKLSLDELERRGNNVGKLFSAIGEPIPQEVPQEVTAAKQHWQDLHDKTAKNAHVYETEAVIWSQIEDAKKDLLPWLSETNQGLCDAADNSIEIEFGPMRLSKYRTELPSYQALKDSIVEKTNDLVKINKGAEIPALSALNKLLSEQFAEVNNNADRLSAITTSFNDQEQELRRRSKEAGERVSKLREQLIKCDDMSGDNNKIMERLQQCRALRGELDNSGNEIDNIKQKVDELRNLYPTFSESIIPKELNNVQKRYENVDLYAKKIESSLLQFLKKFHADKVGMLKRIIATQREKVAWCQPESSSDKYNLDVKKSSLQEVSKSIDDCKARHAETLKSLEMLKAVESPQNLAELTSDAELLRKDMQALQDSFDQIKGILDENVDLWSQYEQSNEQISNWLRDVEGRVKAETSSQVNLSEVPQKLQELSILQQDVLAHEPIINNLEQTSQQLIEKNPEARIGQFVTHLVQRYQAVSKALTSYIDKIRGAQLSNANFAKAAKDFNEWFGDAKIEFQELARMGSPGSSSATAQQLQTVKNYIKTFDNGQILLNNAVDIGEALYPVVSPDNRERIRADLRQMREKFDYLRDEANAFMQQVEGVLIQKTSIEESYTQVSHYLNESKAKVPTTDELYPTLATKKAALQNYKTQLQEITLHKNALKQLHDKAVTLCDDESERKTDESIQEYNTLSKKISDRITTVGNHVVKHEAYDQVLEKAQDWLNTIKSEAIDILNETTFEKEGAEEKLLVVENLLQHKPEGDSIFDTCHKLLETVLTQTHPSGHPALLKGFEEPKQSWEDFMTLCQDSLVKLKQLCSKWDEFDTIIEELDNWMKNVEAVVKNQNLKSTAEAKNAHLKQLQDISKDIERRGAAINELMDQGREIEGETDLNLKLSRLNTRYQTLKNLCKESIAKYVNYVKDHESFDKDFDSFKQNLQSSVDELAKTNEIVGDQSVLQDQQNKLREMSDKRILDSTLFEGLIDRGEKLYGHTSPEGREIIRQQLRALRTLWDNYTDDLNSATQKIDQCLLQFNEFSIAQDQLTKWLKDVDKAMQSHTEPKTTLQEKRAQLQNHKLLHQEITTHNVLVDNVCDKAQILVDQIKDNSLNVYLTSIKQLFQSIVQKSDEILHNLDDCVQKHNELNNALSSAKTWISNEKAKLLECDDAYGEKADIKRKIETLGQLAQNKPQAMKIISDIRDLFEKVKATTSEKGNEVLDKEIEELETTMKSHFDDIEGIEGKQKDVLAQWDKFEKALEELTKWCRSAEAVFREQQLQSTLHEKVEQLEKYKIQRELILQKEKEIDAFGDAAHALLNNCGADRLKTLTTQITNRYQLLQVLSKEVVNRWSNLVDDHQFYQDKYNEVDLWLQPIESQMAKVLLDEPTQSSNILQVLLSEKEQAESLFAALNAAGEKALPETSTQGREKIRKDLRDIRDRWDKLDEGIRNLEKRQEAQGVQLSSYQDILNQTVNWLDQVEKLIHNENPASWTSAQEIRSKLYKYKATNQDINSHKRIVEAVNEKAAALLGSAAPANADEISKAVAEVNKRYDQVGQDCAKLVADLDGAFDVYQQFSELQKAQQDYQKNLWDRLTGYSDYSGNKAALQARLQKINEIQDALPEGVAKLKSLEDHIEQQASNIPARSKEVMARDLANLHADFEKFGASLSDVKSGLENRLQQWNDYEINLDRLITWLGEAENSLKNYNLKSSFEEKEEQLNGFQSLAQNLRQNEADFDKVKDDTSELVQSSGETRIAVNVQQVSSRFQSIQATAKEILKKCEQAVQDHGHFNDKYKQCADWLANAQARYDDCCDLSTVASRDDLLKKQVVIQELLAQQPTATQLLNSTVELGEKCYGSTATEGREAIRSQLDDLTFDQLFDNIAITARKIQDKIAKWSGFDEIADSLKSWLDETENALPADIELKTTLDEKRNKLQTYRDILNDINNHQVELGNLQEIAANLPEKTELVDQIIKDISDRFGKLQKRAQNYVERYEGIVSAHQQYSKAVMDAQEFIDATLNTVHYWGDLDLEQISLHTNLDRLKNLKASLADEFPRVDQVRALGEKVIPGTVDVGQVNIKSQIDTTQQEWESLLTTISSTIEAIEARLQHWSEYEQLRDQCLAWIRDTDNNLHAIDLKEDLPKKRAQLDALKALQGDVRAKELEVDNVTEKAQTLLKGPSSNRASGPELVTKYQQIFHKVKELNNRWQQYVTSHEDFDNAISDCSSWINEIKEKLDYCSDMSSMSPKELDKKLATIQDVILLKDEGSARVLKILEQAQHVLANTAPGGHEAINKELTDLQDLWSGIALRIMDVKSNLDDSITQWSGFLDQVQNVRKFNEWLDGQVKELSEHQTTMTEKRAQLDRVKSTEEKVRVEKIDVDALKIQAKEMIASGQQSQAAFQAQKVLDTFDELFAKTQKLLSHRQDQYRDHRLFKEAYDDLVSWIGRAREKFPSLKQSSLSDKLAIENAVQATEALLNKQAQGELLVEHLVHTGEVVLASTSAQGQEIIRNDIRALRDSFEGLFREINQQKENLEVTMVQWRAYKEEYERLMEWLQQIDILVKNHKLNLCPNLPEKEKQVADMKEVMSRLEKGKDDIDKFNASAASLLKSHLDTYVNNQLRHLSSVYQVQVNLAKDVLKKVETNRDQHREYDANMKSAKDWIANAKATIQSAGEGAGSKEALQRRLEQIQDLIRNRELGQNLVHTAINNGEKIIRNTRSDGRDAINTEMKELQTEWDRLVKKMSTAKVQLETNLLQWADYSSSYSQLQQWITDREAKLQQACEQKIVKSKRGQPGLSSGLSERKANLRQTNNIVQDIVSFEPMIQSVTSKASVLQQGAPGTEISDKYENLTKQAKDLYEKQKNTIESYQSLIDAGNEFATWLRNAKERLSKCSEPTGDKQALAEKTHQLKILQGELPEGAQKLKNALEQGEIACRSAEPEDCEIIEQEVALLQEEFDAYREALNKAKDYLEVGIVKWSDYQDQYTEALEWLSKTEALVQSYNKLQDSLIQKKVVLEQFQGHLQTLFDWQKTLDDLNMKAQVLLETCSDTRISNAIMQLTTKYNALLTLAKEVMRRLEMHYQEHQQHHSLYEECQSWIEKTREKLSECEQIPGTLNEVQIKLNTVKNLRQGFETGQNKLRYLLELKEKVIMNTEQNGAAKIQEDTEALKQDFDKLLVDLNDVRQKLANRLAQLEEIFKLYKILIEWLEDVEPSVKTSDEFLNDLSEKRAALEKFRVIQRDINGHNDIVEKINQRLKEDNSLDLKDFQPGLTKFDDLQTQVNKIIESLENQVNSHEKYKQAYNELQDWLRRTRIEVEQCADCHGEKDQVESRLNRLGDIQSSSLEGKALLEACEELSQAVIATSGSEGQDNVAQEIKHLTSEWETLQTISRDARSSLESCLAAWQTFLQKFNKINLWIETMNKRVTKSQEGENKTPEDLVNAKKLLEEVLAEKDNVEDLNDNCELLMEQSACTRIRDQTIETQANYTKLLTSAQGLVAKIEKNLSDHTEFLNYKKEMDAWIEKAQQVLDDCSTDGDAAIIAQKLDTVNSLASRLPEGQHLLALVQDAYSKASNITPEDKQEKLRELMTKVREDWDALGLAVKQKLSDLKQAQNRWNDFAANKDKLEKWLNETETTLKVAPETKGELSEMKTLLERYKTLSNELKLKGNELEQLQSEARDLGTEVDAVNRLQSRCDKLKNDCSAHITALEQEMFDYNAYHQSLQDVEKWLLQISFQLMAHNSLFISNREQTQEQIKQHEALLVEIQKYQTNLDDLNAKGQAQIKRYESSTPAIRPTVESQLKNIQDSYNSLLQTSVQIKNRLLESLAKFQEYEDTLDSIMRNLETYEPIIQTELDAPATSLELAQNQLRCAQEMQNKLNNEKSRLAAAVQACEAATASISRPSSPLETAMQAIPERELIVRAKLEDLLDQKPPPKTRSSTGGVSTDDDKDEADVEIQVELSDVNEALLDPIAHERVKNYRRIVRLNSAHVGKLNELVAKVQSHLGGLTASVSELEQQQKQRAELQDWVKKQQSSVSDWMMRPCKLRPEAAQQELVSMNDLLNSIGDKRSQLMLEMTGSLGDEDTDLDDNIDKLESELMDAIAKKQAGQNVIDGYRQGMADVQNWFDTLIKRMDVLDRGSGLNCAQKMAAINEIKNEYELQGHPKIQELKGKAAQVAEVISNLDGQQVEEQMKSLDRRFADLGKRIDRKSQLLDVTNKGVEGAKGEIDQLQNWVKQQIEELQAPKPLGYTPKDAEARQQKIKSLMKDAEAKQSLADVLEKRVANMQQELEPVEYSQLESALRNLNTENRNLSGVLKAELDRALEASKARKSLENDLDKARQWLKTKISEVRKLPVYHPLTSAEIEKKIQENRKYDDDAKQFNDSVLTDVQRQAANIMKDCDDADKAALQQILDEIAADYQTLKDESSKRGKSLDDLLQGRKAFEDSMKNMGDWLNEMETATEGELRTTSLPVLEEQLAHYKKLLSDAENKGGLINDVSEQGKSILPTLSNADKLKLNDDIKNMKDRYGRIKNTIDDRVNALGDHIKKYKDAKSRLAECSQFLGNIQQKLRELNRPIGSRIEDVQDLLGAYEGILKELKDSKSKMGDMQMDDLPELQSILAQQDDMIKLIEDQLAHLRQLLLLREQFIALINEIIAFIMKYTDVIIDIENSPDSLEDKINKYDDVIVKIQECEGVLASANDKGQKIASEGNAADKNSITEQLQSLKNQLQNLRKAVESQRQKHQLQLESHKKMAAELSEILDWLHSHEGAAKSRPLLDRDPESVERELQKHQSLSQDIESYLNKFNKINDGVKTEIGMPSSLLEMLSEGRSLVASLPHELEEREKYLKNNRDSRLEYMQLVAKFNDWVHEAELRLQNSQHGIDYEHLVQDLDEHKIFFGNEAPIRNLVHKQIQEAADKIWSSLNNYEQSELSAELAQFQTKLTNTLANAKTQQSELEKEAERWREYQQSIDRVKATIERTKFVDEPVQNLAGLHFNIQKLSHAIGNVQSQNSDLTLVNQQAQSLIRQADARNRQLIEQDNAGLNRSWQDLVRSLEQRRDNLQQLAEHWDGFENSLHAWEKALGRLEDKFRNVDPTVRSRRHLEDTKNAIQELREESNQLKSSHKEIEALSKSILTFLGEVHKPSAEAIQAKVDKLVEQQAKLNDTLRDKEQQVSKDLEEIEQVFRRISQLQDKLNALHEQLQSVHVYDEHIAQTEQLLITLNSQVQQAAEESKLLVAQTTAHYQAKQNQLPSDIAQEFTALELLAERVQVTMETKEKDFKRAKTVRTEYVDGVDEVQRWLLQAEVQVQERSLTPTQMKELLQRINHEITAIYERFTLVKTNGQLIIENCRNSEEKTLVQTTIDQLAASLAQVRGWLDEKKQAVGDSLDAWTRFMNLYQIVMSWASEKRNFIDQTIELRTLPEARNKLNDYVTSVKSIKPIVKHLSEMDKELEHIGQVTTVGDLKDKLQEAEDAKISVEAVLLERNSLLQEACEEWDQCERKIKDIRSWHEKTKQGLDSSQQQKKPLRDQLGFCEKTLADINVQKTKLRLSIEKLEVHFRNGMGGDPRLSENVDDLVRVLDGLGELVKAKSQSLEQTLAQIDVYQQQMQSLRQRIIQEEQQLRLVMAPTYLPHDRERALAEQQDLITQELDELLQSLSSVEDGIANMNQSSLDGMLHGLKLIQSNLEVHERDAIELKNQAKKLPTDPATERLLNDTVDRIDLLLRRTQQGITMIANAMHGQKKRQQEIDEYQQHLLELEQWIIEVSAELASFEPTSDSSTDEQVLKSQVERSQQLLRTLKDRQQSMEDLVEQTRQLQSHPDVSPLADTLMEQLQSIITILREQVTVATKRIFTIEKRIVDLRKAKSEEAQRQRVLADSLIKPPTEAPASPEAHESIESNENTIDSSSMPEEEIKPTGVYVETQTSLSLQQPPVQVVTTTTVEAQTSFKEPAVETAEVALQTQKERSPTENIMVTQTVHHGQETIQIDTTRNKDVPDEPEDVQIEARYHQRPKGDVDRATELILKNVPQAFETTFVEPDETTTEVIVGPDGTKHIVLKKVTRTRQQVVQQQQISSIETISDSDGNIEVHSTGQINLENVHTTDTKADPEEGSVHTVITQQTRGAVVDSTQPEGVILQEFETEPTIETYEEVIAPGSQAQLIPMQPGDVQTQGTIRAVVQQVTRKVIRKTRKIIKRVVIIDGKEHITEEVVEEPEEVEITEEETAPHINVNIVRTVDGKVVSEEEFQRMMQEPGVLIEEVATDLQKPTAEPQQEVFDIESTQVTTTTRTTTATTQEQEQPEQQTQPTTTETTKEAPVELPAPQVDVEQPVVVATTSPVHVPTADVVEPKDSSPTSTTAAVVDVEAVVEDINEIWPLEHHLKPTNIDFSQHVEELAAPAAVTAETEASMPVEEIWPTSPETGNSLTLEQYEFEPQSPHEESTKSDLVKPQETEPQVVAETKPEGITTGSITITKTTTTITSSTEVPEETLVQNVPADEQQPPANKIKTDIQSFLEAEQTLAAALKEQSSTPTGASVAEDVQTQPEEIVLEERTVEISTIKTEENQQEPVIVEEVKSLPVEPEPVEPELEEVAIAIVEQTEEKPEEPVIEKQPASGPIDLRAATQLFISGEAAASTAPQKTFQISAPSLEDNGAGVLKVVLGKESTNEEDTAAPTTGKVSMTIIETAAAPAADAKRRRKKKKRRDTKHEEELEQEQETEPEPVAAVKEPEVSSDVPVSPEDSPRDTVRHESIVEISPDSDLSSIEIDTKVKIVEDAVVSSPSESPRTPMVELVIPTEVVELALVEDEEQQTTPRIPSPTEKSEVEQDIKSVQTSPQHQPKLDETAVQTSLEVQPDNQENESQTLIVEITETEAQTTPRSEEQSVAVEISTTEIQTDVSGQPAETVEISSQTTVTTTIEKELQTTPKDSPRAPEAGSSDVVESLVQDLVKDMTTDLPVRTSEQSTVTETTTTTETHVQTTTPEPREQTEVIKPETAHEETSTVELVQFADGEMQTTPPGDQQPASLDDSSLTATSISVSEPYELEVKTTVAIPADSDTSVAEPTVYEYTQTMQLPKQEKKSKKDKKKKQKNVPEVEQQLPEDQQISVTVEIAPELLSESGIVVSTNQQIEDVPHVTPVVDTPIESEEVETPKAQRVQLQITKTTVYDEYPDLPVHITEQNKVLIASQQSKRSGAGPTSSAVTIEEVGSPTEELVVPITPGPDNLSGEPHNIWFSATTSVDKTPIELSQALIMSESLQHYPGQQKLTQEPILISTKEAIGDRIKQLKQASPQQATPLSNVLHLATLSEQIKELPTEQRILEVNEGLKDLDVAIKNGDKTVIQTTVITVIEKVSTWLETIEYRVYLIRQNSNEGPSEEKLDNYNQLNDELSTIKQNVVQLERQLSKAEPEPQLLQCVDSLKEHVDAVEQVTQQNQVQDSNDLDKWHNFEVLLYNVSSVLADLQQSYDLLINQEYPLSAKLAQLDELEQQHEAAQQQLAHLCQNARAFQRDFPGKKMPQDVHNAFETSKNIANNIQAERERVLQLQSLAEEYEQTLKEFTKITVLADKLVESPIVSSSLEQLNNEVQKQRKFFVNLSHCRAMLESLEENIDSETREKHSELHKELYNRATSLLDKASERSSKLVQAASRWTVLEKGMRDELQWLQVAQQRVPDLSAVTSADYDQYTTLYQSLSNDISHHYVKMTQLSGIANKLQLLVQAPNLVEETNEALIVLLKLREEVALYLHRLLVFKEIWVQYEQQTDKLEAFVREAEQELRNIQIPSQPTHQPIEHMRQFWEIKARFELHNNVRTDTGLSFEKSLQVIPLADEMLQRQFHAQLEDRWQAVAQAIELIQHNIVECLSSEDVPADEKLKMVERELQEIYLTMTSMKGVIKNEEELCLYIERVQVLRTRVGFIGNELGRIGLQEPAIEPEKVGELFSLSHKISTQIAEELEGASVLRDQLQAIQEGISNQRKHQAKISVILDECEAAERQGADVLEKAVADCQAAGEELVISWQEIMRIRQMLHTLPMRLKMSVSPVKLERDISQLQDDHAFLESKCTNIMAILRSRLAVWLRYERQLELVHGSVQETDFMMELIRVHGQVDYERLRKATERLEGLAGDLHNREQLIDELKGAAKPLIESCDVQIVEQIESAVQEAVVAWNDTSENLQQLRTRYQRAVELWDKYRNASAAVKNSIDQQMDAVKSLEQPLDALQHAKVCQDNLTTQNDRILELRDIVAKIAADVGLDASALMQGELDALGQRLAECKDAITTLANVAETQDKERKELDKEVTLAKAYFNNVQQDISREAPQNPKESEEQLAALRAHLQTLARTEEQLRQLKERHQNSEVAPSVASSDDDGILEVLALWQKIFQDTFQEYHRLSTRLARSQNSSEALRLWRQYLQHVQSFLSCAIPEDYSSLREQQQLCAIHQNLLISQQSVLSETPLESELSEQYKALTNLHNETLSRIMQRNGELERRVSGWNAYRQQLAALLDWLRQREAERNALQLRYIHLKRVPHLKHRLDAMIQQLDQGEQQSKALQEQQQELARHCDDALATAMRMEQASIGQRISNLRAALKTWQGFLQRVTQLSESYEQRVNQLQQEFGAAQKLLDANSESLPTQPAAIEQLLGSLRAQRVQLGAQVSALESLTVTQEELKECISPHDMKTIRQRNWLLWQQHADLDYQLANLINSIEERLSLLSNYQIRYDRISQWLQRLEQRVEKDADVTAMTNPEQAAKQLEQQVNSELQLRDKEREWLLSTSRELLTLYSEPEVRSQVQQQSDSLIDRWQRLKYLAKQKATKIGELKMTLLRLEERIALIRAWLFEVESQLDKPLNFESYTPNVIEAKLKEHEQIQRSIEHHSSNVGEVLNLVEMLLNDADSWRTQVNTSGLAASAQNLEQRWKNVCSQSAERKARILTIWNLLQQLIKLTAEHKNWLGKQESQIAGFERDQKSHSKHKLEERQMELRAKLEELESQSVNLRQLEQIYAKLAMSAGVEPENIQKLTLPTKVMVSMWRQLTPRCHALLDAIDKDAKLMREFNNAQLEATNSLNAIQKALEQLPSAENQQTSKAEPKAVLQRLESLEKKLQDAQQHVQQADNLAQEAKTRTKQQPQLKQLLELVSAYTTLWQTVQTRIVTLKTTWLTRAAQAAASLPVSEAANAAVQVNTLSQRKLRQAQQMQRETSITAKDAYIMELQTAITECQNNLDELQRTVVDKTRKPGPQKIAKLLGNAQSSTELVKHLSHLLLTECKADDQAAEVDTVAELTLRFDTLQSQWKARQQHDQNASEVGRLTCPLCTQRNWQQIDNDLWRLEQWLQFAESTQKAQSAPPSNIELLEDVTQDHREFLLDLESHKSIISSLNVVGDHLATHTLDTEKARQLRSRLEADNERWNNVCINATKWQGLLQTALMGNSEFHQTIGELVEWLQRTEQNIKASEPVDLTEERSVLETKFKKFKDLRAELERCEPRVVSLQDAADQLLRSVEGSEQQSQHTYERTLSRLTDLRLRLQSLRRLSGIYIVKLGAVLGYEGDNLGVPLHMLSSELLDNTTLSTSSMQAAAPNTENANNTDGGDAVDGDVINTTVLARGARFLGRVARASLPIQALMLLLLGVATLVPHGEDYTCMFSNTFARSLEPMLSYPHGPPPT</sequence>
<evidence type="ECO:0000250" key="1">
    <source>
        <dbReference type="UniProtKB" id="Q8NF91"/>
    </source>
</evidence>
<evidence type="ECO:0000255" key="2"/>
<evidence type="ECO:0000255" key="3">
    <source>
        <dbReference type="PROSITE-ProRule" id="PRU00044"/>
    </source>
</evidence>
<evidence type="ECO:0000255" key="4">
    <source>
        <dbReference type="PROSITE-ProRule" id="PRU00385"/>
    </source>
</evidence>
<evidence type="ECO:0000256" key="5">
    <source>
        <dbReference type="SAM" id="MobiDB-lite"/>
    </source>
</evidence>
<evidence type="ECO:0000269" key="6">
    <source>
    </source>
</evidence>
<evidence type="ECO:0000269" key="7">
    <source>
    </source>
</evidence>
<evidence type="ECO:0000305" key="8"/>
<evidence type="ECO:0000312" key="9">
    <source>
        <dbReference type="FlyBase" id="FBgn0261836"/>
    </source>
</evidence>
<gene>
    <name evidence="9" type="primary">Msp300</name>
    <name evidence="9" type="ORF">CG42768</name>
</gene>
<proteinExistence type="evidence at protein level"/>
<dbReference type="EMBL" id="AE014134">
    <property type="protein sequence ID" value="ADV36944.1"/>
    <property type="molecule type" value="Genomic_DNA"/>
</dbReference>
<dbReference type="RefSeq" id="NP_001188694.1">
    <property type="nucleotide sequence ID" value="NM_001201765.2"/>
</dbReference>
<dbReference type="SMR" id="M9MRD1"/>
<dbReference type="FunCoup" id="M9MRD1">
    <property type="interactions" value="359"/>
</dbReference>
<dbReference type="IntAct" id="M9MRD1">
    <property type="interactions" value="2"/>
</dbReference>
<dbReference type="GlyGen" id="M9MRD1">
    <property type="glycosylation" value="5 sites, 1 O-linked glycan (1 site)"/>
</dbReference>
<dbReference type="DNASU" id="3771968"/>
<dbReference type="EnsemblMetazoa" id="FBtr0303385">
    <property type="protein sequence ID" value="FBpp0292447"/>
    <property type="gene ID" value="FBgn0261836"/>
</dbReference>
<dbReference type="GeneID" id="3771968"/>
<dbReference type="KEGG" id="dme:Dmel_CG42768"/>
<dbReference type="AGR" id="FB:FBgn0261836"/>
<dbReference type="CTD" id="3771968"/>
<dbReference type="FlyBase" id="FBgn0261836">
    <property type="gene designation" value="Msp300"/>
</dbReference>
<dbReference type="VEuPathDB" id="VectorBase:FBgn0261836"/>
<dbReference type="InParanoid" id="M9MRD1"/>
<dbReference type="OMA" id="FQRFTSQ"/>
<dbReference type="OrthoDB" id="6538186at2759"/>
<dbReference type="PhylomeDB" id="M9MRD1"/>
<dbReference type="BioGRID-ORCS" id="3771968">
    <property type="hits" value="0 hits in 1 CRISPR screen"/>
</dbReference>
<dbReference type="ChiTaRS" id="Msp300">
    <property type="organism name" value="fly"/>
</dbReference>
<dbReference type="GenomeRNAi" id="3771968"/>
<dbReference type="PRO" id="PR:M9MRD1"/>
<dbReference type="Proteomes" id="UP000000803">
    <property type="component" value="Chromosome 2L"/>
</dbReference>
<dbReference type="Bgee" id="FBgn0261836">
    <property type="expression patterns" value="Expressed in adult Malpighian tubule stellate cell of main segment in Malpighian tubule and 294 other cell types or tissues"/>
</dbReference>
<dbReference type="ExpressionAtlas" id="M9MRD1">
    <property type="expression patterns" value="baseline and differential"/>
</dbReference>
<dbReference type="GO" id="GO:0005737">
    <property type="term" value="C:cytoplasm"/>
    <property type="evidence" value="ECO:0000314"/>
    <property type="project" value="FlyBase"/>
</dbReference>
<dbReference type="GO" id="GO:0034993">
    <property type="term" value="C:meiotic nuclear membrane microtubule tethering complex"/>
    <property type="evidence" value="ECO:0000318"/>
    <property type="project" value="GO_Central"/>
</dbReference>
<dbReference type="GO" id="GO:0005815">
    <property type="term" value="C:microtubule organizing center"/>
    <property type="evidence" value="ECO:0007669"/>
    <property type="project" value="UniProtKB-SubCell"/>
</dbReference>
<dbReference type="GO" id="GO:0005635">
    <property type="term" value="C:nuclear envelope"/>
    <property type="evidence" value="ECO:0000314"/>
    <property type="project" value="FlyBase"/>
</dbReference>
<dbReference type="GO" id="GO:0005640">
    <property type="term" value="C:nuclear outer membrane"/>
    <property type="evidence" value="ECO:0000314"/>
    <property type="project" value="FlyBase"/>
</dbReference>
<dbReference type="GO" id="GO:0048471">
    <property type="term" value="C:perinuclear region of cytoplasm"/>
    <property type="evidence" value="ECO:0000314"/>
    <property type="project" value="FlyBase"/>
</dbReference>
<dbReference type="GO" id="GO:0030018">
    <property type="term" value="C:Z disc"/>
    <property type="evidence" value="ECO:0000314"/>
    <property type="project" value="FlyBase"/>
</dbReference>
<dbReference type="GO" id="GO:0003779">
    <property type="term" value="F:actin binding"/>
    <property type="evidence" value="ECO:0000314"/>
    <property type="project" value="FlyBase"/>
</dbReference>
<dbReference type="GO" id="GO:0051015">
    <property type="term" value="F:actin filament binding"/>
    <property type="evidence" value="ECO:0000318"/>
    <property type="project" value="GO_Central"/>
</dbReference>
<dbReference type="GO" id="GO:0019901">
    <property type="term" value="F:protein kinase binding"/>
    <property type="evidence" value="ECO:0000353"/>
    <property type="project" value="FlyBase"/>
</dbReference>
<dbReference type="GO" id="GO:0007015">
    <property type="term" value="P:actin filament organization"/>
    <property type="evidence" value="ECO:0000315"/>
    <property type="project" value="FlyBase"/>
</dbReference>
<dbReference type="GO" id="GO:0016477">
    <property type="term" value="P:cell migration"/>
    <property type="evidence" value="ECO:0000315"/>
    <property type="project" value="FlyBase"/>
</dbReference>
<dbReference type="GO" id="GO:0051643">
    <property type="term" value="P:endoplasmic reticulum localization"/>
    <property type="evidence" value="ECO:0000315"/>
    <property type="project" value="FlyBase"/>
</dbReference>
<dbReference type="GO" id="GO:0008335">
    <property type="term" value="P:female germline ring canal stabilization"/>
    <property type="evidence" value="ECO:0000315"/>
    <property type="project" value="FlyBase"/>
</dbReference>
<dbReference type="GO" id="GO:0060361">
    <property type="term" value="P:flight"/>
    <property type="evidence" value="ECO:0000315"/>
    <property type="project" value="FlyBase"/>
</dbReference>
<dbReference type="GO" id="GO:0007523">
    <property type="term" value="P:larval visceral muscle development"/>
    <property type="evidence" value="ECO:0000315"/>
    <property type="project" value="FlyBase"/>
</dbReference>
<dbReference type="GO" id="GO:0040011">
    <property type="term" value="P:locomotion"/>
    <property type="evidence" value="ECO:0000315"/>
    <property type="project" value="FlyBase"/>
</dbReference>
<dbReference type="GO" id="GO:0007498">
    <property type="term" value="P:mesoderm development"/>
    <property type="evidence" value="ECO:0000303"/>
    <property type="project" value="FlyBase"/>
</dbReference>
<dbReference type="GO" id="GO:0034453">
    <property type="term" value="P:microtubule anchoring"/>
    <property type="evidence" value="ECO:0000316"/>
    <property type="project" value="FlyBase"/>
</dbReference>
<dbReference type="GO" id="GO:0051646">
    <property type="term" value="P:mitochondrion localization"/>
    <property type="evidence" value="ECO:0000315"/>
    <property type="project" value="FlyBase"/>
</dbReference>
<dbReference type="GO" id="GO:0007097">
    <property type="term" value="P:nuclear migration"/>
    <property type="evidence" value="ECO:0000315"/>
    <property type="project" value="FlyBase"/>
</dbReference>
<dbReference type="GO" id="GO:0051647">
    <property type="term" value="P:nucleus localization"/>
    <property type="evidence" value="ECO:0000316"/>
    <property type="project" value="FlyBase"/>
</dbReference>
<dbReference type="GO" id="GO:0006997">
    <property type="term" value="P:nucleus organization"/>
    <property type="evidence" value="ECO:0000316"/>
    <property type="project" value="FlyBase"/>
</dbReference>
<dbReference type="GO" id="GO:0007300">
    <property type="term" value="P:ovarian nurse cell to oocyte transport"/>
    <property type="evidence" value="ECO:0000315"/>
    <property type="project" value="FlyBase"/>
</dbReference>
<dbReference type="CDD" id="cd21241">
    <property type="entry name" value="CH_SYNE1_rpt1"/>
    <property type="match status" value="1"/>
</dbReference>
<dbReference type="CDD" id="cd21243">
    <property type="entry name" value="CH_SYNE1_rpt2"/>
    <property type="match status" value="1"/>
</dbReference>
<dbReference type="CDD" id="cd00176">
    <property type="entry name" value="SPEC"/>
    <property type="match status" value="12"/>
</dbReference>
<dbReference type="FunFam" id="1.20.58.60:FF:000266">
    <property type="entry name" value="Muscle-specific protein 300 kDa, isoform D"/>
    <property type="match status" value="1"/>
</dbReference>
<dbReference type="FunFam" id="1.20.58.60:FF:000326">
    <property type="entry name" value="Muscle-specific protein 300 kDa, isoform D"/>
    <property type="match status" value="1"/>
</dbReference>
<dbReference type="FunFam" id="1.20.58.60:FF:000327">
    <property type="entry name" value="Muscle-specific protein 300 kDa, isoform D"/>
    <property type="match status" value="1"/>
</dbReference>
<dbReference type="FunFam" id="1.20.58.60:FF:000238">
    <property type="entry name" value="Muscle-specific protein 300 kDa, isoform I"/>
    <property type="match status" value="1"/>
</dbReference>
<dbReference type="FunFam" id="1.20.58.60:FF:000261">
    <property type="entry name" value="Muscle-specific protein 300 kDa, isoform L"/>
    <property type="match status" value="1"/>
</dbReference>
<dbReference type="FunFam" id="1.20.58.60:FF:000347">
    <property type="entry name" value="Muscle-specific protein 300 kDa, isoform L"/>
    <property type="match status" value="1"/>
</dbReference>
<dbReference type="FunFam" id="1.20.58.60:FF:000371">
    <property type="entry name" value="Muscle-specific protein 300 kDa, isoform L"/>
    <property type="match status" value="1"/>
</dbReference>
<dbReference type="FunFam" id="1.10.418.10:FF:000033">
    <property type="entry name" value="nesprin-1 isoform X1"/>
    <property type="match status" value="1"/>
</dbReference>
<dbReference type="FunFam" id="1.10.418.10:FF:000037">
    <property type="entry name" value="nesprin-1 isoform X1"/>
    <property type="match status" value="1"/>
</dbReference>
<dbReference type="FunFam" id="1.20.58.60:FF:000169">
    <property type="entry name" value="nesprin-1 isoform X1"/>
    <property type="match status" value="1"/>
</dbReference>
<dbReference type="FunFam" id="1.20.58.60:FF:000186">
    <property type="entry name" value="nesprin-1 isoform X3"/>
    <property type="match status" value="1"/>
</dbReference>
<dbReference type="FunFam" id="1.20.58.60:FF:000171">
    <property type="entry name" value="Uncharacterized protein, isoform B"/>
    <property type="match status" value="1"/>
</dbReference>
<dbReference type="FunFam" id="1.20.58.60:FF:000189">
    <property type="entry name" value="Uncharacterized protein, isoform B"/>
    <property type="match status" value="1"/>
</dbReference>
<dbReference type="FunFam" id="1.20.58.60:FF:000195">
    <property type="entry name" value="Uncharacterized protein, isoform B"/>
    <property type="match status" value="1"/>
</dbReference>
<dbReference type="FunFam" id="1.20.58.60:FF:000205">
    <property type="entry name" value="Uncharacterized protein, isoform B"/>
    <property type="match status" value="1"/>
</dbReference>
<dbReference type="FunFam" id="1.20.58.60:FF:000208">
    <property type="entry name" value="Uncharacterized protein, isoform B"/>
    <property type="match status" value="1"/>
</dbReference>
<dbReference type="FunFam" id="1.20.58.60:FF:000212">
    <property type="entry name" value="Uncharacterized protein, isoform B"/>
    <property type="match status" value="1"/>
</dbReference>
<dbReference type="FunFam" id="1.20.58.60:FF:000218">
    <property type="entry name" value="Uncharacterized protein, isoform B"/>
    <property type="match status" value="1"/>
</dbReference>
<dbReference type="FunFam" id="1.20.58.60:FF:000188">
    <property type="entry name" value="Uncharacterized protein, isoform D"/>
    <property type="match status" value="1"/>
</dbReference>
<dbReference type="FunFam" id="1.20.58.60:FF:000196">
    <property type="entry name" value="Uncharacterized protein, isoform D"/>
    <property type="match status" value="1"/>
</dbReference>
<dbReference type="FunFam" id="1.20.58.60:FF:000202">
    <property type="entry name" value="Uncharacterized protein, isoform D"/>
    <property type="match status" value="1"/>
</dbReference>
<dbReference type="FunFam" id="1.20.58.60:FF:000204">
    <property type="entry name" value="Uncharacterized protein, isoform D"/>
    <property type="match status" value="1"/>
</dbReference>
<dbReference type="FunFam" id="1.20.58.60:FF:000209">
    <property type="entry name" value="Uncharacterized protein, isoform D"/>
    <property type="match status" value="1"/>
</dbReference>
<dbReference type="FunFam" id="1.20.58.60:FF:000222">
    <property type="entry name" value="Uncharacterized protein, isoform D"/>
    <property type="match status" value="1"/>
</dbReference>
<dbReference type="FunFam" id="1.20.58.60:FF:000230">
    <property type="entry name" value="Uncharacterized protein, isoform D"/>
    <property type="match status" value="1"/>
</dbReference>
<dbReference type="FunFam" id="1.20.58.60:FF:000245">
    <property type="entry name" value="Uncharacterized protein, isoform D"/>
    <property type="match status" value="1"/>
</dbReference>
<dbReference type="FunFam" id="1.20.58.60:FF:000278">
    <property type="entry name" value="Uncharacterized protein, isoform D"/>
    <property type="match status" value="1"/>
</dbReference>
<dbReference type="FunFam" id="1.20.58.60:FF:000306">
    <property type="entry name" value="Uncharacterized protein, isoform F"/>
    <property type="match status" value="1"/>
</dbReference>
<dbReference type="FunFam" id="1.20.58.60:FF:000219">
    <property type="entry name" value="Uncharacterized protein, isoform J"/>
    <property type="match status" value="1"/>
</dbReference>
<dbReference type="FunFam" id="1.20.58.60:FF:000262">
    <property type="entry name" value="Uncharacterized protein, isoform J"/>
    <property type="match status" value="1"/>
</dbReference>
<dbReference type="Gene3D" id="1.20.58.60">
    <property type="match status" value="33"/>
</dbReference>
<dbReference type="Gene3D" id="1.10.418.10">
    <property type="entry name" value="Calponin-like domain"/>
    <property type="match status" value="2"/>
</dbReference>
<dbReference type="InterPro" id="IPR001589">
    <property type="entry name" value="Actinin_actin-bd_CS"/>
</dbReference>
<dbReference type="InterPro" id="IPR001715">
    <property type="entry name" value="CH_dom"/>
</dbReference>
<dbReference type="InterPro" id="IPR036872">
    <property type="entry name" value="CH_dom_sf"/>
</dbReference>
<dbReference type="InterPro" id="IPR047290">
    <property type="entry name" value="CH_SYNE1_rpt1"/>
</dbReference>
<dbReference type="InterPro" id="IPR047291">
    <property type="entry name" value="CH_SYNE1_rpt2"/>
</dbReference>
<dbReference type="InterPro" id="IPR012315">
    <property type="entry name" value="KASH"/>
</dbReference>
<dbReference type="InterPro" id="IPR052403">
    <property type="entry name" value="LINC-complex_assoc"/>
</dbReference>
<dbReference type="InterPro" id="IPR018159">
    <property type="entry name" value="Spectrin/alpha-actinin"/>
</dbReference>
<dbReference type="InterPro" id="IPR002017">
    <property type="entry name" value="Spectrin_repeat"/>
</dbReference>
<dbReference type="InterPro" id="IPR057057">
    <property type="entry name" value="Spectrin_SYNE1"/>
</dbReference>
<dbReference type="PANTHER" id="PTHR47535">
    <property type="entry name" value="MUSCLE-SPECIFIC PROTEIN 300 KDA, ISOFORM G"/>
    <property type="match status" value="1"/>
</dbReference>
<dbReference type="PANTHER" id="PTHR47535:SF1">
    <property type="entry name" value="NESPRIN-1"/>
    <property type="match status" value="1"/>
</dbReference>
<dbReference type="Pfam" id="PF00307">
    <property type="entry name" value="CH"/>
    <property type="match status" value="2"/>
</dbReference>
<dbReference type="Pfam" id="PF10541">
    <property type="entry name" value="KASH"/>
    <property type="match status" value="1"/>
</dbReference>
<dbReference type="Pfam" id="PF00435">
    <property type="entry name" value="Spectrin"/>
    <property type="match status" value="7"/>
</dbReference>
<dbReference type="Pfam" id="PF25034">
    <property type="entry name" value="Spectrin_SYNE1"/>
    <property type="match status" value="2"/>
</dbReference>
<dbReference type="SMART" id="SM00033">
    <property type="entry name" value="CH"/>
    <property type="match status" value="2"/>
</dbReference>
<dbReference type="SMART" id="SM01249">
    <property type="entry name" value="KASH"/>
    <property type="match status" value="1"/>
</dbReference>
<dbReference type="SMART" id="SM00150">
    <property type="entry name" value="SPEC"/>
    <property type="match status" value="52"/>
</dbReference>
<dbReference type="SUPFAM" id="SSF47576">
    <property type="entry name" value="Calponin-homology domain, CH-domain"/>
    <property type="match status" value="1"/>
</dbReference>
<dbReference type="SUPFAM" id="SSF46966">
    <property type="entry name" value="Spectrin repeat"/>
    <property type="match status" value="46"/>
</dbReference>
<dbReference type="PROSITE" id="PS00019">
    <property type="entry name" value="ACTININ_1"/>
    <property type="match status" value="1"/>
</dbReference>
<dbReference type="PROSITE" id="PS00020">
    <property type="entry name" value="ACTININ_2"/>
    <property type="match status" value="1"/>
</dbReference>
<dbReference type="PROSITE" id="PS50021">
    <property type="entry name" value="CH"/>
    <property type="match status" value="3"/>
</dbReference>
<dbReference type="PROSITE" id="PS51049">
    <property type="entry name" value="KASH"/>
    <property type="match status" value="1"/>
</dbReference>
<name>MS300_DROME</name>